<protein>
    <recommendedName>
        <fullName>Uncharacterized protein SAS2374</fullName>
    </recommendedName>
</protein>
<reference key="1">
    <citation type="journal article" date="2004" name="Proc. Natl. Acad. Sci. U.S.A.">
        <title>Complete genomes of two clinical Staphylococcus aureus strains: evidence for the rapid evolution of virulence and drug resistance.</title>
        <authorList>
            <person name="Holden M.T.G."/>
            <person name="Feil E.J."/>
            <person name="Lindsay J.A."/>
            <person name="Peacock S.J."/>
            <person name="Day N.P.J."/>
            <person name="Enright M.C."/>
            <person name="Foster T.J."/>
            <person name="Moore C.E."/>
            <person name="Hurst L."/>
            <person name="Atkin R."/>
            <person name="Barron A."/>
            <person name="Bason N."/>
            <person name="Bentley S.D."/>
            <person name="Chillingworth C."/>
            <person name="Chillingworth T."/>
            <person name="Churcher C."/>
            <person name="Clark L."/>
            <person name="Corton C."/>
            <person name="Cronin A."/>
            <person name="Doggett J."/>
            <person name="Dowd L."/>
            <person name="Feltwell T."/>
            <person name="Hance Z."/>
            <person name="Harris B."/>
            <person name="Hauser H."/>
            <person name="Holroyd S."/>
            <person name="Jagels K."/>
            <person name="James K.D."/>
            <person name="Lennard N."/>
            <person name="Line A."/>
            <person name="Mayes R."/>
            <person name="Moule S."/>
            <person name="Mungall K."/>
            <person name="Ormond D."/>
            <person name="Quail M.A."/>
            <person name="Rabbinowitsch E."/>
            <person name="Rutherford K.M."/>
            <person name="Sanders M."/>
            <person name="Sharp S."/>
            <person name="Simmonds M."/>
            <person name="Stevens K."/>
            <person name="Whitehead S."/>
            <person name="Barrell B.G."/>
            <person name="Spratt B.G."/>
            <person name="Parkhill J."/>
        </authorList>
    </citation>
    <scope>NUCLEOTIDE SEQUENCE [LARGE SCALE GENOMIC DNA]</scope>
    <source>
        <strain>MSSA476</strain>
    </source>
</reference>
<sequence length="273" mass="31699">MMHSKKLTLGICLVLLIILIVGYVIMTKANGQNAQIKDTFNQTLKLYPTKNLDDFYDKEGFRDQEFKKGDKGTWIVNSGMNIQLKGGALKSREMVLYINRNTRTTKGYFIVGEITKDKKGYTHDKDKKGYTHDKDKKYPVKMEHNKIIPTKPIKDEKLKKEIENFKFFVQYGNFKDFKDYKNGDISYNPNVPSYSAKYQLSNDDYNIQQLRKRYDIPTKKAPELLLKGDGDLKGSSIGSKDLEFTFVQNKRENIYFTDSVEFTPSEDTSYESN</sequence>
<dbReference type="EMBL" id="BX571857">
    <property type="protein sequence ID" value="CAG44188.1"/>
    <property type="status" value="ALT_INIT"/>
    <property type="molecule type" value="Genomic_DNA"/>
</dbReference>
<dbReference type="RefSeq" id="WP_000972284.1">
    <property type="nucleotide sequence ID" value="NC_002953.3"/>
</dbReference>
<dbReference type="SMR" id="Q6G6I7"/>
<dbReference type="KEGG" id="sas:SAS2374"/>
<dbReference type="HOGENOM" id="CLU_071589_0_0_9"/>
<dbReference type="GO" id="GO:0005886">
    <property type="term" value="C:plasma membrane"/>
    <property type="evidence" value="ECO:0007669"/>
    <property type="project" value="UniProtKB-SubCell"/>
</dbReference>
<dbReference type="Gene3D" id="2.50.20.40">
    <property type="match status" value="1"/>
</dbReference>
<dbReference type="InterPro" id="IPR007595">
    <property type="entry name" value="Csa"/>
</dbReference>
<dbReference type="InterPro" id="IPR038641">
    <property type="entry name" value="Csa_sf"/>
</dbReference>
<dbReference type="NCBIfam" id="TIGR01742">
    <property type="entry name" value="SA_tandem_lipo"/>
    <property type="match status" value="1"/>
</dbReference>
<dbReference type="Pfam" id="PF04507">
    <property type="entry name" value="DUF576"/>
    <property type="match status" value="1"/>
</dbReference>
<proteinExistence type="inferred from homology"/>
<evidence type="ECO:0000255" key="1"/>
<evidence type="ECO:0000305" key="2"/>
<gene>
    <name type="ordered locus">SAS2374</name>
</gene>
<accession>Q6G6I7</accession>
<organism>
    <name type="scientific">Staphylococcus aureus (strain MSSA476)</name>
    <dbReference type="NCBI Taxonomy" id="282459"/>
    <lineage>
        <taxon>Bacteria</taxon>
        <taxon>Bacillati</taxon>
        <taxon>Bacillota</taxon>
        <taxon>Bacilli</taxon>
        <taxon>Bacillales</taxon>
        <taxon>Staphylococcaceae</taxon>
        <taxon>Staphylococcus</taxon>
    </lineage>
</organism>
<name>Y2374_STAAS</name>
<comment type="subcellular location">
    <subcellularLocation>
        <location evidence="2">Cell membrane</location>
        <topology evidence="2">Single-pass membrane protein</topology>
    </subcellularLocation>
</comment>
<comment type="similarity">
    <text evidence="2">Belongs to the staphylococcal tandem lipoprotein family.</text>
</comment>
<comment type="sequence caution" evidence="2">
    <conflict type="erroneous initiation">
        <sequence resource="EMBL-CDS" id="CAG44188"/>
    </conflict>
</comment>
<feature type="chain" id="PRO_0000282164" description="Uncharacterized protein SAS2374">
    <location>
        <begin position="1"/>
        <end position="273"/>
    </location>
</feature>
<feature type="transmembrane region" description="Helical" evidence="1">
    <location>
        <begin position="7"/>
        <end position="27"/>
    </location>
</feature>
<keyword id="KW-1003">Cell membrane</keyword>
<keyword id="KW-0472">Membrane</keyword>
<keyword id="KW-0812">Transmembrane</keyword>
<keyword id="KW-1133">Transmembrane helix</keyword>